<protein>
    <recommendedName>
        <fullName evidence="1">Protein-glutamate methylesterase/protein-glutamine glutaminase 1</fullName>
        <ecNumber evidence="1">3.1.1.61</ecNumber>
        <ecNumber evidence="1">3.5.1.44</ecNumber>
    </recommendedName>
</protein>
<organism>
    <name type="scientific">Burkholderia pseudomallei (strain K96243)</name>
    <dbReference type="NCBI Taxonomy" id="272560"/>
    <lineage>
        <taxon>Bacteria</taxon>
        <taxon>Pseudomonadati</taxon>
        <taxon>Pseudomonadota</taxon>
        <taxon>Betaproteobacteria</taxon>
        <taxon>Burkholderiales</taxon>
        <taxon>Burkholderiaceae</taxon>
        <taxon>Burkholderia</taxon>
        <taxon>pseudomallei group</taxon>
    </lineage>
</organism>
<proteinExistence type="inferred from homology"/>
<gene>
    <name evidence="1" type="primary">cheB1</name>
    <name type="ordered locus">BPSL3301</name>
</gene>
<evidence type="ECO:0000255" key="1">
    <source>
        <dbReference type="HAMAP-Rule" id="MF_00099"/>
    </source>
</evidence>
<accession>Q63PS2</accession>
<comment type="function">
    <text evidence="1">Involved in chemotaxis. Part of a chemotaxis signal transduction system that modulates chemotaxis in response to various stimuli. Catalyzes the demethylation of specific methylglutamate residues introduced into the chemoreceptors (methyl-accepting chemotaxis proteins or MCP) by CheR. Also mediates the irreversible deamidation of specific glutamine residues to glutamic acid.</text>
</comment>
<comment type="catalytic activity">
    <reaction evidence="1">
        <text>[protein]-L-glutamate 5-O-methyl ester + H2O = L-glutamyl-[protein] + methanol + H(+)</text>
        <dbReference type="Rhea" id="RHEA:23236"/>
        <dbReference type="Rhea" id="RHEA-COMP:10208"/>
        <dbReference type="Rhea" id="RHEA-COMP:10311"/>
        <dbReference type="ChEBI" id="CHEBI:15377"/>
        <dbReference type="ChEBI" id="CHEBI:15378"/>
        <dbReference type="ChEBI" id="CHEBI:17790"/>
        <dbReference type="ChEBI" id="CHEBI:29973"/>
        <dbReference type="ChEBI" id="CHEBI:82795"/>
        <dbReference type="EC" id="3.1.1.61"/>
    </reaction>
</comment>
<comment type="catalytic activity">
    <reaction evidence="1">
        <text>L-glutaminyl-[protein] + H2O = L-glutamyl-[protein] + NH4(+)</text>
        <dbReference type="Rhea" id="RHEA:16441"/>
        <dbReference type="Rhea" id="RHEA-COMP:10207"/>
        <dbReference type="Rhea" id="RHEA-COMP:10208"/>
        <dbReference type="ChEBI" id="CHEBI:15377"/>
        <dbReference type="ChEBI" id="CHEBI:28938"/>
        <dbReference type="ChEBI" id="CHEBI:29973"/>
        <dbReference type="ChEBI" id="CHEBI:30011"/>
        <dbReference type="EC" id="3.5.1.44"/>
    </reaction>
</comment>
<comment type="subcellular location">
    <subcellularLocation>
        <location evidence="1">Cytoplasm</location>
    </subcellularLocation>
</comment>
<comment type="domain">
    <text evidence="1">Contains a C-terminal catalytic domain, and an N-terminal region which modulates catalytic activity.</text>
</comment>
<comment type="PTM">
    <text evidence="1">Phosphorylated by CheA. Phosphorylation of the N-terminal regulatory domain activates the methylesterase activity.</text>
</comment>
<comment type="similarity">
    <text evidence="1">Belongs to the CheB family.</text>
</comment>
<dbReference type="EC" id="3.1.1.61" evidence="1"/>
<dbReference type="EC" id="3.5.1.44" evidence="1"/>
<dbReference type="EMBL" id="BX571965">
    <property type="protein sequence ID" value="CAH37314.1"/>
    <property type="molecule type" value="Genomic_DNA"/>
</dbReference>
<dbReference type="RefSeq" id="YP_109897.1">
    <property type="nucleotide sequence ID" value="NC_006350.1"/>
</dbReference>
<dbReference type="SMR" id="Q63PS2"/>
<dbReference type="STRING" id="272560.BPSL3301"/>
<dbReference type="KEGG" id="bps:BPSL3301"/>
<dbReference type="PATRIC" id="fig|272560.6.peg.3755"/>
<dbReference type="eggNOG" id="COG2201">
    <property type="taxonomic scope" value="Bacteria"/>
</dbReference>
<dbReference type="Proteomes" id="UP000000605">
    <property type="component" value="Chromosome 1"/>
</dbReference>
<dbReference type="GO" id="GO:0005737">
    <property type="term" value="C:cytoplasm"/>
    <property type="evidence" value="ECO:0007669"/>
    <property type="project" value="UniProtKB-SubCell"/>
</dbReference>
<dbReference type="GO" id="GO:0000156">
    <property type="term" value="F:phosphorelay response regulator activity"/>
    <property type="evidence" value="ECO:0007669"/>
    <property type="project" value="InterPro"/>
</dbReference>
<dbReference type="GO" id="GO:0008984">
    <property type="term" value="F:protein-glutamate methylesterase activity"/>
    <property type="evidence" value="ECO:0007669"/>
    <property type="project" value="UniProtKB-UniRule"/>
</dbReference>
<dbReference type="GO" id="GO:0050568">
    <property type="term" value="F:protein-glutamine glutaminase activity"/>
    <property type="evidence" value="ECO:0007669"/>
    <property type="project" value="UniProtKB-UniRule"/>
</dbReference>
<dbReference type="GO" id="GO:0006935">
    <property type="term" value="P:chemotaxis"/>
    <property type="evidence" value="ECO:0007669"/>
    <property type="project" value="UniProtKB-UniRule"/>
</dbReference>
<dbReference type="CDD" id="cd16432">
    <property type="entry name" value="CheB_Rec"/>
    <property type="match status" value="1"/>
</dbReference>
<dbReference type="CDD" id="cd17541">
    <property type="entry name" value="REC_CheB-like"/>
    <property type="match status" value="1"/>
</dbReference>
<dbReference type="FunFam" id="3.40.50.180:FF:000001">
    <property type="entry name" value="Protein-glutamate methylesterase/protein-glutamine glutaminase"/>
    <property type="match status" value="1"/>
</dbReference>
<dbReference type="FunFam" id="3.40.50.2300:FF:000060">
    <property type="entry name" value="Protein-glutamate methylesterase/protein-glutamine glutaminase"/>
    <property type="match status" value="1"/>
</dbReference>
<dbReference type="Gene3D" id="3.40.50.2300">
    <property type="match status" value="1"/>
</dbReference>
<dbReference type="Gene3D" id="3.40.50.180">
    <property type="entry name" value="Methylesterase CheB, C-terminal domain"/>
    <property type="match status" value="1"/>
</dbReference>
<dbReference type="HAMAP" id="MF_00099">
    <property type="entry name" value="CheB_chemtxs"/>
    <property type="match status" value="1"/>
</dbReference>
<dbReference type="InterPro" id="IPR008248">
    <property type="entry name" value="CheB-like"/>
</dbReference>
<dbReference type="InterPro" id="IPR035909">
    <property type="entry name" value="CheB_C"/>
</dbReference>
<dbReference type="InterPro" id="IPR011006">
    <property type="entry name" value="CheY-like_superfamily"/>
</dbReference>
<dbReference type="InterPro" id="IPR000673">
    <property type="entry name" value="Sig_transdc_resp-reg_Me-estase"/>
</dbReference>
<dbReference type="InterPro" id="IPR001789">
    <property type="entry name" value="Sig_transdc_resp-reg_receiver"/>
</dbReference>
<dbReference type="NCBIfam" id="NF001965">
    <property type="entry name" value="PRK00742.1"/>
    <property type="match status" value="1"/>
</dbReference>
<dbReference type="NCBIfam" id="NF009206">
    <property type="entry name" value="PRK12555.1"/>
    <property type="match status" value="1"/>
</dbReference>
<dbReference type="PANTHER" id="PTHR42872">
    <property type="entry name" value="PROTEIN-GLUTAMATE METHYLESTERASE/PROTEIN-GLUTAMINE GLUTAMINASE"/>
    <property type="match status" value="1"/>
</dbReference>
<dbReference type="PANTHER" id="PTHR42872:SF6">
    <property type="entry name" value="PROTEIN-GLUTAMATE METHYLESTERASE_PROTEIN-GLUTAMINE GLUTAMINASE"/>
    <property type="match status" value="1"/>
</dbReference>
<dbReference type="Pfam" id="PF01339">
    <property type="entry name" value="CheB_methylest"/>
    <property type="match status" value="1"/>
</dbReference>
<dbReference type="Pfam" id="PF00072">
    <property type="entry name" value="Response_reg"/>
    <property type="match status" value="1"/>
</dbReference>
<dbReference type="PIRSF" id="PIRSF000876">
    <property type="entry name" value="RR_chemtxs_CheB"/>
    <property type="match status" value="1"/>
</dbReference>
<dbReference type="SMART" id="SM00448">
    <property type="entry name" value="REC"/>
    <property type="match status" value="1"/>
</dbReference>
<dbReference type="SUPFAM" id="SSF52172">
    <property type="entry name" value="CheY-like"/>
    <property type="match status" value="1"/>
</dbReference>
<dbReference type="SUPFAM" id="SSF52738">
    <property type="entry name" value="Methylesterase CheB, C-terminal domain"/>
    <property type="match status" value="1"/>
</dbReference>
<dbReference type="PROSITE" id="PS50122">
    <property type="entry name" value="CHEB"/>
    <property type="match status" value="1"/>
</dbReference>
<dbReference type="PROSITE" id="PS50110">
    <property type="entry name" value="RESPONSE_REGULATORY"/>
    <property type="match status" value="1"/>
</dbReference>
<feature type="chain" id="PRO_0000225445" description="Protein-glutamate methylesterase/protein-glutamine glutaminase 1">
    <location>
        <begin position="1"/>
        <end position="367"/>
    </location>
</feature>
<feature type="domain" description="Response regulatory" evidence="1">
    <location>
        <begin position="9"/>
        <end position="126"/>
    </location>
</feature>
<feature type="domain" description="CheB-type methylesterase" evidence="1">
    <location>
        <begin position="168"/>
        <end position="360"/>
    </location>
</feature>
<feature type="active site" evidence="1">
    <location>
        <position position="180"/>
    </location>
</feature>
<feature type="active site" evidence="1">
    <location>
        <position position="206"/>
    </location>
</feature>
<feature type="active site" evidence="1">
    <location>
        <position position="302"/>
    </location>
</feature>
<feature type="modified residue" description="4-aspartylphosphate" evidence="1">
    <location>
        <position position="60"/>
    </location>
</feature>
<reference key="1">
    <citation type="journal article" date="2004" name="Proc. Natl. Acad. Sci. U.S.A.">
        <title>Genomic plasticity of the causative agent of melioidosis, Burkholderia pseudomallei.</title>
        <authorList>
            <person name="Holden M.T.G."/>
            <person name="Titball R.W."/>
            <person name="Peacock S.J."/>
            <person name="Cerdeno-Tarraga A.-M."/>
            <person name="Atkins T."/>
            <person name="Crossman L.C."/>
            <person name="Pitt T."/>
            <person name="Churcher C."/>
            <person name="Mungall K.L."/>
            <person name="Bentley S.D."/>
            <person name="Sebaihia M."/>
            <person name="Thomson N.R."/>
            <person name="Bason N."/>
            <person name="Beacham I.R."/>
            <person name="Brooks K."/>
            <person name="Brown K.A."/>
            <person name="Brown N.F."/>
            <person name="Challis G.L."/>
            <person name="Cherevach I."/>
            <person name="Chillingworth T."/>
            <person name="Cronin A."/>
            <person name="Crossett B."/>
            <person name="Davis P."/>
            <person name="DeShazer D."/>
            <person name="Feltwell T."/>
            <person name="Fraser A."/>
            <person name="Hance Z."/>
            <person name="Hauser H."/>
            <person name="Holroyd S."/>
            <person name="Jagels K."/>
            <person name="Keith K.E."/>
            <person name="Maddison M."/>
            <person name="Moule S."/>
            <person name="Price C."/>
            <person name="Quail M.A."/>
            <person name="Rabbinowitsch E."/>
            <person name="Rutherford K."/>
            <person name="Sanders M."/>
            <person name="Simmonds M."/>
            <person name="Songsivilai S."/>
            <person name="Stevens K."/>
            <person name="Tumapa S."/>
            <person name="Vesaratchavest M."/>
            <person name="Whitehead S."/>
            <person name="Yeats C."/>
            <person name="Barrell B.G."/>
            <person name="Oyston P.C.F."/>
            <person name="Parkhill J."/>
        </authorList>
    </citation>
    <scope>NUCLEOTIDE SEQUENCE [LARGE SCALE GENOMIC DNA]</scope>
    <source>
        <strain>K96243</strain>
    </source>
</reference>
<keyword id="KW-0145">Chemotaxis</keyword>
<keyword id="KW-0963">Cytoplasm</keyword>
<keyword id="KW-0378">Hydrolase</keyword>
<keyword id="KW-0597">Phosphoprotein</keyword>
<keyword id="KW-1185">Reference proteome</keyword>
<name>CHEB1_BURPS</name>
<sequence>MNAVQKKIKVLCVDDSALIRSLMTEIINSQPDMEVCATAPDPLVARELIKQHNPDVLTLDVEMPRMDGLDFLEKLMRLRPMPVVMVSSLTERGSEITLRALELGAVDFVTKPRVGIRDGMLDYSEKLADKVRAASRARVRQNPQPHAAAAAAAHGHAGAAAPLINNPLVSTEKLIIVGASTGGTEAIREVLTPLPPDAPAVLIAQHMPPGFTRSFAQRLNGLCRISVKEAEHGERVLPGHAYIAPGHAHLLLARSGANYIAHLSDEPPVNRHRPSVDVLFRSAAQHAGKNALGVILTGMGRDGAAGLLEMKKAGAYTFAQDEASCVVFGMPREAIAMGGVDDVAPLSDMSRRIMARLASMGDRVQRV</sequence>